<dbReference type="EC" id="2.1.1.228" evidence="1"/>
<dbReference type="EMBL" id="CP000360">
    <property type="protein sequence ID" value="ABF41876.1"/>
    <property type="molecule type" value="Genomic_DNA"/>
</dbReference>
<dbReference type="RefSeq" id="WP_011523677.1">
    <property type="nucleotide sequence ID" value="NC_008009.1"/>
</dbReference>
<dbReference type="SMR" id="Q1IMM4"/>
<dbReference type="STRING" id="204669.Acid345_2875"/>
<dbReference type="EnsemblBacteria" id="ABF41876">
    <property type="protein sequence ID" value="ABF41876"/>
    <property type="gene ID" value="Acid345_2875"/>
</dbReference>
<dbReference type="KEGG" id="aba:Acid345_2875"/>
<dbReference type="eggNOG" id="COG0336">
    <property type="taxonomic scope" value="Bacteria"/>
</dbReference>
<dbReference type="HOGENOM" id="CLU_047363_0_1_0"/>
<dbReference type="OrthoDB" id="9807416at2"/>
<dbReference type="Proteomes" id="UP000002432">
    <property type="component" value="Chromosome"/>
</dbReference>
<dbReference type="GO" id="GO:0005829">
    <property type="term" value="C:cytosol"/>
    <property type="evidence" value="ECO:0007669"/>
    <property type="project" value="TreeGrafter"/>
</dbReference>
<dbReference type="GO" id="GO:0052906">
    <property type="term" value="F:tRNA (guanine(37)-N1)-methyltransferase activity"/>
    <property type="evidence" value="ECO:0007669"/>
    <property type="project" value="UniProtKB-UniRule"/>
</dbReference>
<dbReference type="GO" id="GO:0002939">
    <property type="term" value="P:tRNA N1-guanine methylation"/>
    <property type="evidence" value="ECO:0007669"/>
    <property type="project" value="TreeGrafter"/>
</dbReference>
<dbReference type="CDD" id="cd18080">
    <property type="entry name" value="TrmD-like"/>
    <property type="match status" value="1"/>
</dbReference>
<dbReference type="FunFam" id="1.10.1270.20:FF:000001">
    <property type="entry name" value="tRNA (guanine-N(1)-)-methyltransferase"/>
    <property type="match status" value="1"/>
</dbReference>
<dbReference type="FunFam" id="3.40.1280.10:FF:000001">
    <property type="entry name" value="tRNA (guanine-N(1)-)-methyltransferase"/>
    <property type="match status" value="1"/>
</dbReference>
<dbReference type="Gene3D" id="3.40.1280.10">
    <property type="match status" value="1"/>
</dbReference>
<dbReference type="Gene3D" id="1.10.1270.20">
    <property type="entry name" value="tRNA(m1g37)methyltransferase, domain 2"/>
    <property type="match status" value="1"/>
</dbReference>
<dbReference type="HAMAP" id="MF_00605">
    <property type="entry name" value="TrmD"/>
    <property type="match status" value="1"/>
</dbReference>
<dbReference type="InterPro" id="IPR029028">
    <property type="entry name" value="Alpha/beta_knot_MTases"/>
</dbReference>
<dbReference type="InterPro" id="IPR023148">
    <property type="entry name" value="tRNA_m1G_MeTrfase_C_sf"/>
</dbReference>
<dbReference type="InterPro" id="IPR002649">
    <property type="entry name" value="tRNA_m1G_MeTrfase_TrmD"/>
</dbReference>
<dbReference type="InterPro" id="IPR029026">
    <property type="entry name" value="tRNA_m1G_MTases_N"/>
</dbReference>
<dbReference type="InterPro" id="IPR016009">
    <property type="entry name" value="tRNA_MeTrfase_TRMD/TRM10"/>
</dbReference>
<dbReference type="NCBIfam" id="NF000648">
    <property type="entry name" value="PRK00026.1"/>
    <property type="match status" value="1"/>
</dbReference>
<dbReference type="NCBIfam" id="TIGR00088">
    <property type="entry name" value="trmD"/>
    <property type="match status" value="1"/>
</dbReference>
<dbReference type="PANTHER" id="PTHR46417">
    <property type="entry name" value="TRNA (GUANINE-N(1)-)-METHYLTRANSFERASE"/>
    <property type="match status" value="1"/>
</dbReference>
<dbReference type="PANTHER" id="PTHR46417:SF1">
    <property type="entry name" value="TRNA (GUANINE-N(1)-)-METHYLTRANSFERASE"/>
    <property type="match status" value="1"/>
</dbReference>
<dbReference type="Pfam" id="PF01746">
    <property type="entry name" value="tRNA_m1G_MT"/>
    <property type="match status" value="1"/>
</dbReference>
<dbReference type="PIRSF" id="PIRSF000386">
    <property type="entry name" value="tRNA_mtase"/>
    <property type="match status" value="1"/>
</dbReference>
<dbReference type="SUPFAM" id="SSF75217">
    <property type="entry name" value="alpha/beta knot"/>
    <property type="match status" value="1"/>
</dbReference>
<reference key="1">
    <citation type="journal article" date="2009" name="Appl. Environ. Microbiol.">
        <title>Three genomes from the phylum Acidobacteria provide insight into the lifestyles of these microorganisms in soils.</title>
        <authorList>
            <person name="Ward N.L."/>
            <person name="Challacombe J.F."/>
            <person name="Janssen P.H."/>
            <person name="Henrissat B."/>
            <person name="Coutinho P.M."/>
            <person name="Wu M."/>
            <person name="Xie G."/>
            <person name="Haft D.H."/>
            <person name="Sait M."/>
            <person name="Badger J."/>
            <person name="Barabote R.D."/>
            <person name="Bradley B."/>
            <person name="Brettin T.S."/>
            <person name="Brinkac L.M."/>
            <person name="Bruce D."/>
            <person name="Creasy T."/>
            <person name="Daugherty S.C."/>
            <person name="Davidsen T.M."/>
            <person name="DeBoy R.T."/>
            <person name="Detter J.C."/>
            <person name="Dodson R.J."/>
            <person name="Durkin A.S."/>
            <person name="Ganapathy A."/>
            <person name="Gwinn-Giglio M."/>
            <person name="Han C.S."/>
            <person name="Khouri H."/>
            <person name="Kiss H."/>
            <person name="Kothari S.P."/>
            <person name="Madupu R."/>
            <person name="Nelson K.E."/>
            <person name="Nelson W.C."/>
            <person name="Paulsen I."/>
            <person name="Penn K."/>
            <person name="Ren Q."/>
            <person name="Rosovitz M.J."/>
            <person name="Selengut J.D."/>
            <person name="Shrivastava S."/>
            <person name="Sullivan S.A."/>
            <person name="Tapia R."/>
            <person name="Thompson L.S."/>
            <person name="Watkins K.L."/>
            <person name="Yang Q."/>
            <person name="Yu C."/>
            <person name="Zafar N."/>
            <person name="Zhou L."/>
            <person name="Kuske C.R."/>
        </authorList>
    </citation>
    <scope>NUCLEOTIDE SEQUENCE [LARGE SCALE GENOMIC DNA]</scope>
    <source>
        <strain>Ellin345</strain>
    </source>
</reference>
<organism>
    <name type="scientific">Koribacter versatilis (strain Ellin345)</name>
    <dbReference type="NCBI Taxonomy" id="204669"/>
    <lineage>
        <taxon>Bacteria</taxon>
        <taxon>Pseudomonadati</taxon>
        <taxon>Acidobacteriota</taxon>
        <taxon>Terriglobia</taxon>
        <taxon>Terriglobales</taxon>
        <taxon>Candidatus Korobacteraceae</taxon>
        <taxon>Candidatus Korobacter</taxon>
    </lineage>
</organism>
<protein>
    <recommendedName>
        <fullName evidence="1">tRNA (guanine-N(1)-)-methyltransferase</fullName>
        <ecNumber evidence="1">2.1.1.228</ecNumber>
    </recommendedName>
    <alternativeName>
        <fullName evidence="1">M1G-methyltransferase</fullName>
    </alternativeName>
    <alternativeName>
        <fullName evidence="1">tRNA [GM37] methyltransferase</fullName>
    </alternativeName>
</protein>
<sequence>MKIDLITIFPEFFRGPLDHGIVSRAQKAGLVEITIRDLREFTHDRHRTVDDRPFGGGEGMVLKPEPIFECLEAMEIPPRGNRENVQVLVLSPQGRLFDQTMALELSKLDRLVLINGRYEGVDERVSEVLADGEISVGDFVLSGGELGSAIIVDAVTRLLPGALGNADSARQESFTAVAKEISEGPDSTCASGGLLDYPHYTRPAEFRGYVVPQVLQDGNHAEIQRWRRRRALEKTFKNRPDLLEGAELSKEDQKYLAQLRAGKD</sequence>
<keyword id="KW-0963">Cytoplasm</keyword>
<keyword id="KW-0489">Methyltransferase</keyword>
<keyword id="KW-1185">Reference proteome</keyword>
<keyword id="KW-0949">S-adenosyl-L-methionine</keyword>
<keyword id="KW-0808">Transferase</keyword>
<keyword id="KW-0819">tRNA processing</keyword>
<proteinExistence type="inferred from homology"/>
<comment type="function">
    <text evidence="1">Specifically methylates guanosine-37 in various tRNAs.</text>
</comment>
<comment type="catalytic activity">
    <reaction evidence="1">
        <text>guanosine(37) in tRNA + S-adenosyl-L-methionine = N(1)-methylguanosine(37) in tRNA + S-adenosyl-L-homocysteine + H(+)</text>
        <dbReference type="Rhea" id="RHEA:36899"/>
        <dbReference type="Rhea" id="RHEA-COMP:10145"/>
        <dbReference type="Rhea" id="RHEA-COMP:10147"/>
        <dbReference type="ChEBI" id="CHEBI:15378"/>
        <dbReference type="ChEBI" id="CHEBI:57856"/>
        <dbReference type="ChEBI" id="CHEBI:59789"/>
        <dbReference type="ChEBI" id="CHEBI:73542"/>
        <dbReference type="ChEBI" id="CHEBI:74269"/>
        <dbReference type="EC" id="2.1.1.228"/>
    </reaction>
</comment>
<comment type="subunit">
    <text evidence="1">Homodimer.</text>
</comment>
<comment type="subcellular location">
    <subcellularLocation>
        <location evidence="1">Cytoplasm</location>
    </subcellularLocation>
</comment>
<comment type="similarity">
    <text evidence="1">Belongs to the RNA methyltransferase TrmD family.</text>
</comment>
<evidence type="ECO:0000255" key="1">
    <source>
        <dbReference type="HAMAP-Rule" id="MF_00605"/>
    </source>
</evidence>
<accession>Q1IMM4</accession>
<gene>
    <name evidence="1" type="primary">trmD</name>
    <name type="ordered locus">Acid345_2875</name>
</gene>
<feature type="chain" id="PRO_0000257385" description="tRNA (guanine-N(1)-)-methyltransferase">
    <location>
        <begin position="1"/>
        <end position="264"/>
    </location>
</feature>
<feature type="binding site" evidence="1">
    <location>
        <position position="116"/>
    </location>
    <ligand>
        <name>S-adenosyl-L-methionine</name>
        <dbReference type="ChEBI" id="CHEBI:59789"/>
    </ligand>
</feature>
<feature type="binding site" evidence="1">
    <location>
        <begin position="136"/>
        <end position="141"/>
    </location>
    <ligand>
        <name>S-adenosyl-L-methionine</name>
        <dbReference type="ChEBI" id="CHEBI:59789"/>
    </ligand>
</feature>
<name>TRMD_KORVE</name>